<protein>
    <recommendedName>
        <fullName evidence="1">Small ribosomal subunit protein uS11</fullName>
    </recommendedName>
    <alternativeName>
        <fullName evidence="2">30S ribosomal protein S11</fullName>
    </alternativeName>
</protein>
<gene>
    <name evidence="1" type="primary">rps11</name>
    <name type="ordered locus">Cmaq_1645</name>
</gene>
<accession>A8M9Z7</accession>
<proteinExistence type="inferred from homology"/>
<feature type="chain" id="PRO_1000086180" description="Small ribosomal subunit protein uS11">
    <location>
        <begin position="1"/>
        <end position="132"/>
    </location>
</feature>
<evidence type="ECO:0000255" key="1">
    <source>
        <dbReference type="HAMAP-Rule" id="MF_01310"/>
    </source>
</evidence>
<evidence type="ECO:0000305" key="2"/>
<sequence>MQQLRKLRWGIAYIYASSNNTMIIITDLTGSETVARVSGGQVVKADRDKPSPYAAMMAAYKAAQIAMARGINAVHVKVRGPGGYGLKVPGPGAVAAIRALARAGMIIGRIEDVTPIPHDTIRPPGGRRGRRV</sequence>
<reference key="1">
    <citation type="submission" date="2007-10" db="EMBL/GenBank/DDBJ databases">
        <title>Complete sequence of Caldivirga maquilingensis IC-167.</title>
        <authorList>
            <consortium name="US DOE Joint Genome Institute"/>
            <person name="Copeland A."/>
            <person name="Lucas S."/>
            <person name="Lapidus A."/>
            <person name="Barry K."/>
            <person name="Glavina del Rio T."/>
            <person name="Dalin E."/>
            <person name="Tice H."/>
            <person name="Pitluck S."/>
            <person name="Saunders E."/>
            <person name="Brettin T."/>
            <person name="Bruce D."/>
            <person name="Detter J.C."/>
            <person name="Han C."/>
            <person name="Schmutz J."/>
            <person name="Larimer F."/>
            <person name="Land M."/>
            <person name="Hauser L."/>
            <person name="Kyrpides N."/>
            <person name="Ivanova N."/>
            <person name="Biddle J.F."/>
            <person name="Zhang Z."/>
            <person name="Fitz-Gibbon S.T."/>
            <person name="Lowe T.M."/>
            <person name="Saltikov C."/>
            <person name="House C.H."/>
            <person name="Richardson P."/>
        </authorList>
    </citation>
    <scope>NUCLEOTIDE SEQUENCE [LARGE SCALE GENOMIC DNA]</scope>
    <source>
        <strain>ATCC 700844 / DSM 13496 / JCM 10307 / IC-167</strain>
    </source>
</reference>
<name>RS11_CALMQ</name>
<comment type="function">
    <text evidence="1">Located on the platform of the 30S subunit.</text>
</comment>
<comment type="subunit">
    <text evidence="1">Part of the 30S ribosomal subunit.</text>
</comment>
<comment type="similarity">
    <text evidence="1">Belongs to the universal ribosomal protein uS11 family.</text>
</comment>
<keyword id="KW-1185">Reference proteome</keyword>
<keyword id="KW-0687">Ribonucleoprotein</keyword>
<keyword id="KW-0689">Ribosomal protein</keyword>
<keyword id="KW-0694">RNA-binding</keyword>
<keyword id="KW-0699">rRNA-binding</keyword>
<dbReference type="EMBL" id="CP000852">
    <property type="protein sequence ID" value="ABW02468.1"/>
    <property type="molecule type" value="Genomic_DNA"/>
</dbReference>
<dbReference type="RefSeq" id="WP_012186687.1">
    <property type="nucleotide sequence ID" value="NC_009954.1"/>
</dbReference>
<dbReference type="SMR" id="A8M9Z7"/>
<dbReference type="STRING" id="397948.Cmaq_1645"/>
<dbReference type="GeneID" id="5709544"/>
<dbReference type="KEGG" id="cma:Cmaq_1645"/>
<dbReference type="eggNOG" id="arCOG04240">
    <property type="taxonomic scope" value="Archaea"/>
</dbReference>
<dbReference type="HOGENOM" id="CLU_072439_6_1_2"/>
<dbReference type="OrthoDB" id="12054at2157"/>
<dbReference type="Proteomes" id="UP000001137">
    <property type="component" value="Chromosome"/>
</dbReference>
<dbReference type="GO" id="GO:1990904">
    <property type="term" value="C:ribonucleoprotein complex"/>
    <property type="evidence" value="ECO:0007669"/>
    <property type="project" value="UniProtKB-KW"/>
</dbReference>
<dbReference type="GO" id="GO:0005840">
    <property type="term" value="C:ribosome"/>
    <property type="evidence" value="ECO:0007669"/>
    <property type="project" value="UniProtKB-KW"/>
</dbReference>
<dbReference type="GO" id="GO:0019843">
    <property type="term" value="F:rRNA binding"/>
    <property type="evidence" value="ECO:0007669"/>
    <property type="project" value="UniProtKB-UniRule"/>
</dbReference>
<dbReference type="GO" id="GO:0003735">
    <property type="term" value="F:structural constituent of ribosome"/>
    <property type="evidence" value="ECO:0007669"/>
    <property type="project" value="InterPro"/>
</dbReference>
<dbReference type="GO" id="GO:0006412">
    <property type="term" value="P:translation"/>
    <property type="evidence" value="ECO:0007669"/>
    <property type="project" value="UniProtKB-UniRule"/>
</dbReference>
<dbReference type="FunFam" id="3.30.420.80:FF:000007">
    <property type="entry name" value="30S ribosomal protein S11"/>
    <property type="match status" value="1"/>
</dbReference>
<dbReference type="Gene3D" id="3.30.420.80">
    <property type="entry name" value="Ribosomal protein S11"/>
    <property type="match status" value="1"/>
</dbReference>
<dbReference type="HAMAP" id="MF_01310">
    <property type="entry name" value="Ribosomal_uS11"/>
    <property type="match status" value="1"/>
</dbReference>
<dbReference type="InterPro" id="IPR001971">
    <property type="entry name" value="Ribosomal_uS11"/>
</dbReference>
<dbReference type="InterPro" id="IPR019961">
    <property type="entry name" value="Ribosomal_uS11_archaeal"/>
</dbReference>
<dbReference type="InterPro" id="IPR018102">
    <property type="entry name" value="Ribosomal_uS11_CS"/>
</dbReference>
<dbReference type="InterPro" id="IPR036967">
    <property type="entry name" value="Ribosomal_uS11_sf"/>
</dbReference>
<dbReference type="NCBIfam" id="TIGR03628">
    <property type="entry name" value="arch_S11P"/>
    <property type="match status" value="1"/>
</dbReference>
<dbReference type="NCBIfam" id="NF007176">
    <property type="entry name" value="PRK09607.1"/>
    <property type="match status" value="1"/>
</dbReference>
<dbReference type="PANTHER" id="PTHR11759">
    <property type="entry name" value="40S RIBOSOMAL PROTEIN S14/30S RIBOSOMAL PROTEIN S11"/>
    <property type="match status" value="1"/>
</dbReference>
<dbReference type="Pfam" id="PF00411">
    <property type="entry name" value="Ribosomal_S11"/>
    <property type="match status" value="1"/>
</dbReference>
<dbReference type="PIRSF" id="PIRSF002131">
    <property type="entry name" value="Ribosomal_S11"/>
    <property type="match status" value="1"/>
</dbReference>
<dbReference type="SUPFAM" id="SSF53137">
    <property type="entry name" value="Translational machinery components"/>
    <property type="match status" value="1"/>
</dbReference>
<dbReference type="PROSITE" id="PS00054">
    <property type="entry name" value="RIBOSOMAL_S11"/>
    <property type="match status" value="1"/>
</dbReference>
<organism>
    <name type="scientific">Caldivirga maquilingensis (strain ATCC 700844 / DSM 13496 / JCM 10307 / IC-167)</name>
    <dbReference type="NCBI Taxonomy" id="397948"/>
    <lineage>
        <taxon>Archaea</taxon>
        <taxon>Thermoproteota</taxon>
        <taxon>Thermoprotei</taxon>
        <taxon>Thermoproteales</taxon>
        <taxon>Thermoproteaceae</taxon>
        <taxon>Caldivirga</taxon>
    </lineage>
</organism>